<sequence>MQLSPVTLPTTAEEAMAVQDDLRARVVAANPRPPVFATVAGVDSAYDDAAGLVATAVVVLDTATLEPIESAVAHGPVRFPYVPGLLAFRELPTTLSALEQLRTTPDLLVCDAQGLAHPRRFGLACHVGVRTGLPTIGVAKNAWGAWTEPGRRRGDAAELVLDGEVVGLALRTRDDVKPVFVSVGHHIDLPTAREQVLALTPRYRQPETTRQADRLCRAALRAATGG</sequence>
<evidence type="ECO:0000255" key="1">
    <source>
        <dbReference type="HAMAP-Rule" id="MF_00801"/>
    </source>
</evidence>
<reference key="1">
    <citation type="journal article" date="2004" name="Proc. Natl. Acad. Sci. U.S.A.">
        <title>The complete genomic sequence of Nocardia farcinica IFM 10152.</title>
        <authorList>
            <person name="Ishikawa J."/>
            <person name="Yamashita A."/>
            <person name="Mikami Y."/>
            <person name="Hoshino Y."/>
            <person name="Kurita H."/>
            <person name="Hotta K."/>
            <person name="Shiba T."/>
            <person name="Hattori M."/>
        </authorList>
    </citation>
    <scope>NUCLEOTIDE SEQUENCE [LARGE SCALE GENOMIC DNA]</scope>
    <source>
        <strain>IFM 10152</strain>
    </source>
</reference>
<gene>
    <name evidence="1" type="primary">nfi</name>
    <name type="ordered locus">NFA_45770</name>
</gene>
<comment type="function">
    <text evidence="1">DNA repair enzyme involved in the repair of deaminated bases. Selectively cleaves double-stranded DNA at the second phosphodiester bond 3' to a deoxyinosine leaving behind the intact lesion on the nicked DNA.</text>
</comment>
<comment type="catalytic activity">
    <reaction evidence="1">
        <text>Endonucleolytic cleavage at apurinic or apyrimidinic sites to products with a 5'-phosphate.</text>
        <dbReference type="EC" id="3.1.21.7"/>
    </reaction>
</comment>
<comment type="cofactor">
    <cofactor evidence="1">
        <name>Mg(2+)</name>
        <dbReference type="ChEBI" id="CHEBI:18420"/>
    </cofactor>
</comment>
<comment type="subcellular location">
    <subcellularLocation>
        <location evidence="1">Cytoplasm</location>
    </subcellularLocation>
</comment>
<comment type="similarity">
    <text evidence="1">Belongs to the endonuclease V family.</text>
</comment>
<name>NFI_NOCFA</name>
<dbReference type="EC" id="3.1.21.7" evidence="1"/>
<dbReference type="EMBL" id="AP006618">
    <property type="protein sequence ID" value="BAD59428.1"/>
    <property type="molecule type" value="Genomic_DNA"/>
</dbReference>
<dbReference type="RefSeq" id="WP_011211112.1">
    <property type="nucleotide sequence ID" value="NC_006361.1"/>
</dbReference>
<dbReference type="SMR" id="Q5YQW3"/>
<dbReference type="STRING" id="247156.NFA_45770"/>
<dbReference type="GeneID" id="61135184"/>
<dbReference type="KEGG" id="nfa:NFA_45770"/>
<dbReference type="eggNOG" id="COG1515">
    <property type="taxonomic scope" value="Bacteria"/>
</dbReference>
<dbReference type="HOGENOM" id="CLU_047631_1_1_11"/>
<dbReference type="Proteomes" id="UP000006820">
    <property type="component" value="Chromosome"/>
</dbReference>
<dbReference type="GO" id="GO:0005737">
    <property type="term" value="C:cytoplasm"/>
    <property type="evidence" value="ECO:0007669"/>
    <property type="project" value="UniProtKB-SubCell"/>
</dbReference>
<dbReference type="GO" id="GO:0043737">
    <property type="term" value="F:deoxyribonuclease V activity"/>
    <property type="evidence" value="ECO:0007669"/>
    <property type="project" value="UniProtKB-UniRule"/>
</dbReference>
<dbReference type="GO" id="GO:0000287">
    <property type="term" value="F:magnesium ion binding"/>
    <property type="evidence" value="ECO:0007669"/>
    <property type="project" value="UniProtKB-UniRule"/>
</dbReference>
<dbReference type="GO" id="GO:0016891">
    <property type="term" value="F:RNA endonuclease activity, producing 5'-phosphomonoesters"/>
    <property type="evidence" value="ECO:0007669"/>
    <property type="project" value="TreeGrafter"/>
</dbReference>
<dbReference type="GO" id="GO:0003727">
    <property type="term" value="F:single-stranded RNA binding"/>
    <property type="evidence" value="ECO:0007669"/>
    <property type="project" value="TreeGrafter"/>
</dbReference>
<dbReference type="GO" id="GO:0006281">
    <property type="term" value="P:DNA repair"/>
    <property type="evidence" value="ECO:0007669"/>
    <property type="project" value="UniProtKB-UniRule"/>
</dbReference>
<dbReference type="CDD" id="cd06559">
    <property type="entry name" value="Endonuclease_V"/>
    <property type="match status" value="1"/>
</dbReference>
<dbReference type="FunFam" id="3.30.2170.10:FF:000007">
    <property type="entry name" value="Endonuclease V"/>
    <property type="match status" value="1"/>
</dbReference>
<dbReference type="Gene3D" id="3.30.2170.10">
    <property type="entry name" value="archaeoglobus fulgidus dsm 4304 superfamily"/>
    <property type="match status" value="1"/>
</dbReference>
<dbReference type="HAMAP" id="MF_00801">
    <property type="entry name" value="Endonuclease_5"/>
    <property type="match status" value="1"/>
</dbReference>
<dbReference type="InterPro" id="IPR007581">
    <property type="entry name" value="Endonuclease-V"/>
</dbReference>
<dbReference type="PANTHER" id="PTHR28511">
    <property type="entry name" value="ENDONUCLEASE V"/>
    <property type="match status" value="1"/>
</dbReference>
<dbReference type="PANTHER" id="PTHR28511:SF1">
    <property type="entry name" value="ENDONUCLEASE V"/>
    <property type="match status" value="1"/>
</dbReference>
<dbReference type="Pfam" id="PF04493">
    <property type="entry name" value="Endonuclease_5"/>
    <property type="match status" value="1"/>
</dbReference>
<proteinExistence type="inferred from homology"/>
<protein>
    <recommendedName>
        <fullName evidence="1">Endonuclease V</fullName>
        <ecNumber evidence="1">3.1.21.7</ecNumber>
    </recommendedName>
    <alternativeName>
        <fullName evidence="1">Deoxyinosine 3'endonuclease</fullName>
    </alternativeName>
    <alternativeName>
        <fullName evidence="1">Deoxyribonuclease V</fullName>
        <shortName evidence="1">DNase V</shortName>
    </alternativeName>
</protein>
<keyword id="KW-0963">Cytoplasm</keyword>
<keyword id="KW-0227">DNA damage</keyword>
<keyword id="KW-0234">DNA repair</keyword>
<keyword id="KW-0255">Endonuclease</keyword>
<keyword id="KW-0378">Hydrolase</keyword>
<keyword id="KW-0460">Magnesium</keyword>
<keyword id="KW-0479">Metal-binding</keyword>
<keyword id="KW-0540">Nuclease</keyword>
<keyword id="KW-1185">Reference proteome</keyword>
<organism>
    <name type="scientific">Nocardia farcinica (strain IFM 10152)</name>
    <dbReference type="NCBI Taxonomy" id="247156"/>
    <lineage>
        <taxon>Bacteria</taxon>
        <taxon>Bacillati</taxon>
        <taxon>Actinomycetota</taxon>
        <taxon>Actinomycetes</taxon>
        <taxon>Mycobacteriales</taxon>
        <taxon>Nocardiaceae</taxon>
        <taxon>Nocardia</taxon>
    </lineage>
</organism>
<feature type="chain" id="PRO_0000159664" description="Endonuclease V">
    <location>
        <begin position="1"/>
        <end position="226"/>
    </location>
</feature>
<feature type="binding site" evidence="1">
    <location>
        <position position="43"/>
    </location>
    <ligand>
        <name>Mg(2+)</name>
        <dbReference type="ChEBI" id="CHEBI:18420"/>
    </ligand>
</feature>
<feature type="binding site" evidence="1">
    <location>
        <position position="111"/>
    </location>
    <ligand>
        <name>Mg(2+)</name>
        <dbReference type="ChEBI" id="CHEBI:18420"/>
    </ligand>
</feature>
<feature type="site" description="Interaction with target DNA" evidence="1">
    <location>
        <position position="81"/>
    </location>
</feature>
<accession>Q5YQW3</accession>